<protein>
    <recommendedName>
        <fullName evidence="1">Elongation factor 4</fullName>
        <shortName evidence="1">EF-4</shortName>
        <ecNumber evidence="1">3.6.5.n1</ecNumber>
    </recommendedName>
    <alternativeName>
        <fullName evidence="1">Ribosomal back-translocase LepA</fullName>
    </alternativeName>
</protein>
<proteinExistence type="inferred from homology"/>
<comment type="function">
    <text evidence="1">Required for accurate and efficient protein synthesis under certain stress conditions. May act as a fidelity factor of the translation reaction, by catalyzing a one-codon backward translocation of tRNAs on improperly translocated ribosomes. Back-translocation proceeds from a post-translocation (POST) complex to a pre-translocation (PRE) complex, thus giving elongation factor G a second chance to translocate the tRNAs correctly. Binds to ribosomes in a GTP-dependent manner.</text>
</comment>
<comment type="catalytic activity">
    <reaction evidence="1">
        <text>GTP + H2O = GDP + phosphate + H(+)</text>
        <dbReference type="Rhea" id="RHEA:19669"/>
        <dbReference type="ChEBI" id="CHEBI:15377"/>
        <dbReference type="ChEBI" id="CHEBI:15378"/>
        <dbReference type="ChEBI" id="CHEBI:37565"/>
        <dbReference type="ChEBI" id="CHEBI:43474"/>
        <dbReference type="ChEBI" id="CHEBI:58189"/>
        <dbReference type="EC" id="3.6.5.n1"/>
    </reaction>
</comment>
<comment type="subcellular location">
    <subcellularLocation>
        <location evidence="1">Cell inner membrane</location>
        <topology evidence="1">Peripheral membrane protein</topology>
        <orientation evidence="1">Cytoplasmic side</orientation>
    </subcellularLocation>
</comment>
<comment type="similarity">
    <text evidence="1">Belongs to the TRAFAC class translation factor GTPase superfamily. Classic translation factor GTPase family. LepA subfamily.</text>
</comment>
<organism>
    <name type="scientific">Oleidesulfovibrio alaskensis (strain ATCC BAA-1058 / DSM 17464 / G20)</name>
    <name type="common">Desulfovibrio alaskensis</name>
    <dbReference type="NCBI Taxonomy" id="207559"/>
    <lineage>
        <taxon>Bacteria</taxon>
        <taxon>Pseudomonadati</taxon>
        <taxon>Thermodesulfobacteriota</taxon>
        <taxon>Desulfovibrionia</taxon>
        <taxon>Desulfovibrionales</taxon>
        <taxon>Desulfovibrionaceae</taxon>
        <taxon>Oleidesulfovibrio</taxon>
    </lineage>
</organism>
<evidence type="ECO:0000255" key="1">
    <source>
        <dbReference type="HAMAP-Rule" id="MF_00071"/>
    </source>
</evidence>
<accession>Q30XI4</accession>
<reference key="1">
    <citation type="journal article" date="2011" name="J. Bacteriol.">
        <title>Complete genome sequence and updated annotation of Desulfovibrio alaskensis G20.</title>
        <authorList>
            <person name="Hauser L.J."/>
            <person name="Land M.L."/>
            <person name="Brown S.D."/>
            <person name="Larimer F."/>
            <person name="Keller K.L."/>
            <person name="Rapp-Giles B.J."/>
            <person name="Price M.N."/>
            <person name="Lin M."/>
            <person name="Bruce D.C."/>
            <person name="Detter J.C."/>
            <person name="Tapia R."/>
            <person name="Han C.S."/>
            <person name="Goodwin L.A."/>
            <person name="Cheng J.F."/>
            <person name="Pitluck S."/>
            <person name="Copeland A."/>
            <person name="Lucas S."/>
            <person name="Nolan M."/>
            <person name="Lapidus A.L."/>
            <person name="Palumbo A.V."/>
            <person name="Wall J.D."/>
        </authorList>
    </citation>
    <scope>NUCLEOTIDE SEQUENCE [LARGE SCALE GENOMIC DNA]</scope>
    <source>
        <strain>ATCC BAA-1058 / DSM 17464 / G20</strain>
    </source>
</reference>
<name>LEPA_OLEA2</name>
<feature type="chain" id="PRO_0000224758" description="Elongation factor 4">
    <location>
        <begin position="1"/>
        <end position="601"/>
    </location>
</feature>
<feature type="domain" description="tr-type G">
    <location>
        <begin position="5"/>
        <end position="187"/>
    </location>
</feature>
<feature type="binding site" evidence="1">
    <location>
        <begin position="17"/>
        <end position="22"/>
    </location>
    <ligand>
        <name>GTP</name>
        <dbReference type="ChEBI" id="CHEBI:37565"/>
    </ligand>
</feature>
<feature type="binding site" evidence="1">
    <location>
        <begin position="134"/>
        <end position="137"/>
    </location>
    <ligand>
        <name>GTP</name>
        <dbReference type="ChEBI" id="CHEBI:37565"/>
    </ligand>
</feature>
<sequence>MAKQSNIRNFSIIAHIDHGKSTLADRILDVTGLVTERDKRDQYLDRMELERERGITIKAQAVRIPYKAADGREYVLNLIDTPGHVDFSYEVSRSLAACEGALLVVDATQGVEAQTLANVFLALDHDHEIIPVLNKIDLPSSDIARVKAEIEDGIGLDAAEAVEVSAKTGLNVDKVLEAIVERLPAPEGDSDAPLQALIFDSWYDSYQGVVVMFRVMHGTIRKGDSIQMMATGKKYEVTRLGVFSPEAKDVDCFTAGDVGFLCAAIKELGDAKVGDTVTHSSRPAATPLPGFKEVKPMVFCGLYPTDSSEYEQLKYALEKLQLNDAAFSFEAETSQALGFGYRCGFLGLLHMEIVQERLEREFNIGLIATAPSVVYKVLTVDGEEKYIENPAALPDPTKIEGLYEPYVRMEIHVPNEFVGNVFKLCEEKRGIQKDMRYLAVNRVIITYELPFAEIVYDFFDKLKSLTRGYASMDYEIIDYRQSNLVKLDMLINGDPVDALACIVHRDKAYYQGRAIALRLKRTIPRQMFEVVVQAAIGNKIIARERNAPLRKNVTAKCYGGDITRKRKLLEKQKEGKKRMKRMGNVELPQEAFLAALQVDDE</sequence>
<gene>
    <name evidence="1" type="primary">lepA</name>
    <name type="ordered locus">Dde_2817</name>
</gene>
<dbReference type="EC" id="3.6.5.n1" evidence="1"/>
<dbReference type="EMBL" id="CP000112">
    <property type="protein sequence ID" value="ABB39612.1"/>
    <property type="molecule type" value="Genomic_DNA"/>
</dbReference>
<dbReference type="RefSeq" id="WP_011368619.1">
    <property type="nucleotide sequence ID" value="NC_007519.1"/>
</dbReference>
<dbReference type="SMR" id="Q30XI4"/>
<dbReference type="STRING" id="207559.Dde_2817"/>
<dbReference type="KEGG" id="dde:Dde_2817"/>
<dbReference type="eggNOG" id="COG0481">
    <property type="taxonomic scope" value="Bacteria"/>
</dbReference>
<dbReference type="HOGENOM" id="CLU_009995_3_3_7"/>
<dbReference type="Proteomes" id="UP000002710">
    <property type="component" value="Chromosome"/>
</dbReference>
<dbReference type="GO" id="GO:0005886">
    <property type="term" value="C:plasma membrane"/>
    <property type="evidence" value="ECO:0007669"/>
    <property type="project" value="UniProtKB-SubCell"/>
</dbReference>
<dbReference type="GO" id="GO:0005525">
    <property type="term" value="F:GTP binding"/>
    <property type="evidence" value="ECO:0007669"/>
    <property type="project" value="UniProtKB-UniRule"/>
</dbReference>
<dbReference type="GO" id="GO:0003924">
    <property type="term" value="F:GTPase activity"/>
    <property type="evidence" value="ECO:0007669"/>
    <property type="project" value="UniProtKB-UniRule"/>
</dbReference>
<dbReference type="GO" id="GO:0043022">
    <property type="term" value="F:ribosome binding"/>
    <property type="evidence" value="ECO:0007669"/>
    <property type="project" value="UniProtKB-UniRule"/>
</dbReference>
<dbReference type="GO" id="GO:0003746">
    <property type="term" value="F:translation elongation factor activity"/>
    <property type="evidence" value="ECO:0007669"/>
    <property type="project" value="UniProtKB-UniRule"/>
</dbReference>
<dbReference type="GO" id="GO:0045727">
    <property type="term" value="P:positive regulation of translation"/>
    <property type="evidence" value="ECO:0007669"/>
    <property type="project" value="UniProtKB-UniRule"/>
</dbReference>
<dbReference type="CDD" id="cd03699">
    <property type="entry name" value="EF4_II"/>
    <property type="match status" value="1"/>
</dbReference>
<dbReference type="CDD" id="cd16260">
    <property type="entry name" value="EF4_III"/>
    <property type="match status" value="1"/>
</dbReference>
<dbReference type="CDD" id="cd01890">
    <property type="entry name" value="LepA"/>
    <property type="match status" value="1"/>
</dbReference>
<dbReference type="CDD" id="cd03709">
    <property type="entry name" value="lepA_C"/>
    <property type="match status" value="1"/>
</dbReference>
<dbReference type="FunFam" id="3.40.50.300:FF:000078">
    <property type="entry name" value="Elongation factor 4"/>
    <property type="match status" value="1"/>
</dbReference>
<dbReference type="FunFam" id="2.40.30.10:FF:000015">
    <property type="entry name" value="Translation factor GUF1, mitochondrial"/>
    <property type="match status" value="1"/>
</dbReference>
<dbReference type="FunFam" id="3.30.70.240:FF:000007">
    <property type="entry name" value="Translation factor GUF1, mitochondrial"/>
    <property type="match status" value="1"/>
</dbReference>
<dbReference type="FunFam" id="3.30.70.2570:FF:000001">
    <property type="entry name" value="Translation factor GUF1, mitochondrial"/>
    <property type="match status" value="1"/>
</dbReference>
<dbReference type="FunFam" id="3.30.70.870:FF:000004">
    <property type="entry name" value="Translation factor GUF1, mitochondrial"/>
    <property type="match status" value="1"/>
</dbReference>
<dbReference type="Gene3D" id="3.30.70.240">
    <property type="match status" value="1"/>
</dbReference>
<dbReference type="Gene3D" id="3.30.70.2570">
    <property type="entry name" value="Elongation factor 4, C-terminal domain"/>
    <property type="match status" value="1"/>
</dbReference>
<dbReference type="Gene3D" id="3.30.70.870">
    <property type="entry name" value="Elongation Factor G (Translational Gtpase), domain 3"/>
    <property type="match status" value="1"/>
</dbReference>
<dbReference type="Gene3D" id="3.40.50.300">
    <property type="entry name" value="P-loop containing nucleotide triphosphate hydrolases"/>
    <property type="match status" value="1"/>
</dbReference>
<dbReference type="Gene3D" id="2.40.30.10">
    <property type="entry name" value="Translation factors"/>
    <property type="match status" value="1"/>
</dbReference>
<dbReference type="HAMAP" id="MF_00071">
    <property type="entry name" value="LepA"/>
    <property type="match status" value="1"/>
</dbReference>
<dbReference type="InterPro" id="IPR006297">
    <property type="entry name" value="EF-4"/>
</dbReference>
<dbReference type="InterPro" id="IPR035647">
    <property type="entry name" value="EFG_III/V"/>
</dbReference>
<dbReference type="InterPro" id="IPR000640">
    <property type="entry name" value="EFG_V-like"/>
</dbReference>
<dbReference type="InterPro" id="IPR004161">
    <property type="entry name" value="EFTu-like_2"/>
</dbReference>
<dbReference type="InterPro" id="IPR031157">
    <property type="entry name" value="G_TR_CS"/>
</dbReference>
<dbReference type="InterPro" id="IPR038363">
    <property type="entry name" value="LepA_C_sf"/>
</dbReference>
<dbReference type="InterPro" id="IPR013842">
    <property type="entry name" value="LepA_CTD"/>
</dbReference>
<dbReference type="InterPro" id="IPR035654">
    <property type="entry name" value="LepA_IV"/>
</dbReference>
<dbReference type="InterPro" id="IPR027417">
    <property type="entry name" value="P-loop_NTPase"/>
</dbReference>
<dbReference type="InterPro" id="IPR005225">
    <property type="entry name" value="Small_GTP-bd"/>
</dbReference>
<dbReference type="InterPro" id="IPR000795">
    <property type="entry name" value="T_Tr_GTP-bd_dom"/>
</dbReference>
<dbReference type="NCBIfam" id="TIGR01393">
    <property type="entry name" value="lepA"/>
    <property type="match status" value="1"/>
</dbReference>
<dbReference type="NCBIfam" id="TIGR00231">
    <property type="entry name" value="small_GTP"/>
    <property type="match status" value="1"/>
</dbReference>
<dbReference type="PANTHER" id="PTHR43512:SF4">
    <property type="entry name" value="TRANSLATION FACTOR GUF1 HOMOLOG, CHLOROPLASTIC"/>
    <property type="match status" value="1"/>
</dbReference>
<dbReference type="PANTHER" id="PTHR43512">
    <property type="entry name" value="TRANSLATION FACTOR GUF1-RELATED"/>
    <property type="match status" value="1"/>
</dbReference>
<dbReference type="Pfam" id="PF00679">
    <property type="entry name" value="EFG_C"/>
    <property type="match status" value="1"/>
</dbReference>
<dbReference type="Pfam" id="PF00009">
    <property type="entry name" value="GTP_EFTU"/>
    <property type="match status" value="1"/>
</dbReference>
<dbReference type="Pfam" id="PF03144">
    <property type="entry name" value="GTP_EFTU_D2"/>
    <property type="match status" value="1"/>
</dbReference>
<dbReference type="Pfam" id="PF06421">
    <property type="entry name" value="LepA_C"/>
    <property type="match status" value="1"/>
</dbReference>
<dbReference type="PRINTS" id="PR00315">
    <property type="entry name" value="ELONGATNFCT"/>
</dbReference>
<dbReference type="SMART" id="SM00838">
    <property type="entry name" value="EFG_C"/>
    <property type="match status" value="1"/>
</dbReference>
<dbReference type="SUPFAM" id="SSF54980">
    <property type="entry name" value="EF-G C-terminal domain-like"/>
    <property type="match status" value="2"/>
</dbReference>
<dbReference type="SUPFAM" id="SSF52540">
    <property type="entry name" value="P-loop containing nucleoside triphosphate hydrolases"/>
    <property type="match status" value="1"/>
</dbReference>
<dbReference type="PROSITE" id="PS00301">
    <property type="entry name" value="G_TR_1"/>
    <property type="match status" value="1"/>
</dbReference>
<dbReference type="PROSITE" id="PS51722">
    <property type="entry name" value="G_TR_2"/>
    <property type="match status" value="1"/>
</dbReference>
<keyword id="KW-0997">Cell inner membrane</keyword>
<keyword id="KW-1003">Cell membrane</keyword>
<keyword id="KW-0342">GTP-binding</keyword>
<keyword id="KW-0378">Hydrolase</keyword>
<keyword id="KW-0472">Membrane</keyword>
<keyword id="KW-0547">Nucleotide-binding</keyword>
<keyword id="KW-0648">Protein biosynthesis</keyword>
<keyword id="KW-1185">Reference proteome</keyword>